<evidence type="ECO:0000250" key="1">
    <source>
        <dbReference type="UniProtKB" id="A2BIE7"/>
    </source>
</evidence>
<evidence type="ECO:0000250" key="2">
    <source>
        <dbReference type="UniProtKB" id="Q4VBD2"/>
    </source>
</evidence>
<evidence type="ECO:0000250" key="3">
    <source>
        <dbReference type="UniProtKB" id="Q6NXT6"/>
    </source>
</evidence>
<evidence type="ECO:0000255" key="4"/>
<evidence type="ECO:0000256" key="5">
    <source>
        <dbReference type="SAM" id="MobiDB-lite"/>
    </source>
</evidence>
<evidence type="ECO:0000305" key="6"/>
<reference key="1">
    <citation type="journal article" date="2005" name="Genome Biol.">
        <title>Full-length cDNAs from chicken bursal lymphocytes to facilitate gene function analysis.</title>
        <authorList>
            <person name="Caldwell R.B."/>
            <person name="Kierzek A.M."/>
            <person name="Arakawa H."/>
            <person name="Bezzubov Y."/>
            <person name="Zaim J."/>
            <person name="Fiedler P."/>
            <person name="Kutter S."/>
            <person name="Blagodatski A."/>
            <person name="Kostovska D."/>
            <person name="Koter M."/>
            <person name="Plachy J."/>
            <person name="Carninci P."/>
            <person name="Hayashizaki Y."/>
            <person name="Buerstedde J.-M."/>
        </authorList>
    </citation>
    <scope>NUCLEOTIDE SEQUENCE [LARGE SCALE MRNA]</scope>
    <source>
        <strain>CB</strain>
        <tissue>Bursa of Fabricius</tissue>
    </source>
</reference>
<sequence>MAGVSDAAAPGSGGEGRRGGGGSPEQLQQDGCRGEPKTLWGSSELRPPPAGPGQPSPHQRTETLGFYESDRGRKKKRGLSDLSLLRFISAELTRGYFLEHNEAKYTERRERVYTCMRIPKELEKLMFFGIFLCLDAFLYIFTLLPLRVFLAMFRFITLPCYGLRDRRLLQPAQVCDILKGVILVICYFMMHYVDYSMMYHLIRGQSVIKLYIIYNMLEVADRLFSSFGQDILDALYWTATEPKERKRAHIGVIPHFFMAVLYVFLHAILIMVQATTLNVAFNSHNKSLLTIMMSNNFVEIKGSVFKKFEKNNLFQMSNSDIKERFTNYVLLLIVCLRNMEQFSWNPDHLWVLFPDVCMVVASEIAVDIVKHAFITKFNDITADVYSEYRASLAFDLVSSRQKNAYTDYSDSVSRRMGFIPLPLAVLLMRVVTSSIKVQGVLAYVCVVLFYCGLISLKVLNSIVLLGKSCQYVKEAKMEEKLFNPVPSASAGKPAGKPQSMFKSTHGFSTDENGSTSVTNQPVHQKDSPPSLLVTSNSDQFLTTPDGEEKDISQDSSELKHRSSKKDLLEIDRFTICGNRID</sequence>
<organism>
    <name type="scientific">Gallus gallus</name>
    <name type="common">Chicken</name>
    <dbReference type="NCBI Taxonomy" id="9031"/>
    <lineage>
        <taxon>Eukaryota</taxon>
        <taxon>Metazoa</taxon>
        <taxon>Chordata</taxon>
        <taxon>Craniata</taxon>
        <taxon>Vertebrata</taxon>
        <taxon>Euteleostomi</taxon>
        <taxon>Archelosauria</taxon>
        <taxon>Archosauria</taxon>
        <taxon>Dinosauria</taxon>
        <taxon>Saurischia</taxon>
        <taxon>Theropoda</taxon>
        <taxon>Coelurosauria</taxon>
        <taxon>Aves</taxon>
        <taxon>Neognathae</taxon>
        <taxon>Galloanserae</taxon>
        <taxon>Galliformes</taxon>
        <taxon>Phasianidae</taxon>
        <taxon>Phasianinae</taxon>
        <taxon>Gallus</taxon>
    </lineage>
</organism>
<accession>Q5ZLG8</accession>
<name>TAPT1_CHICK</name>
<keyword id="KW-0966">Cell projection</keyword>
<keyword id="KW-0891">Chondrogenesis</keyword>
<keyword id="KW-0969">Cilium</keyword>
<keyword id="KW-0970">Cilium biogenesis/degradation</keyword>
<keyword id="KW-0963">Cytoplasm</keyword>
<keyword id="KW-0206">Cytoskeleton</keyword>
<keyword id="KW-0217">Developmental protein</keyword>
<keyword id="KW-0221">Differentiation</keyword>
<keyword id="KW-0472">Membrane</keyword>
<keyword id="KW-0892">Osteogenesis</keyword>
<keyword id="KW-1185">Reference proteome</keyword>
<keyword id="KW-0812">Transmembrane</keyword>
<keyword id="KW-1133">Transmembrane helix</keyword>
<comment type="function">
    <text evidence="1 2 3">Plays a role in primary cilia formation. May act as a downstream effector of HOXC8 during development. May be involved in cartilage and bone development. May play a role in the differentiation of cranial neural crest cells.</text>
</comment>
<comment type="subcellular location">
    <subcellularLocation>
        <location evidence="3">Cytoplasm</location>
        <location evidence="3">Cytoskeleton</location>
        <location evidence="3">Microtubule organizing center</location>
        <location evidence="3">Centrosome</location>
    </subcellularLocation>
    <subcellularLocation>
        <location evidence="3">Cytoplasm</location>
        <location evidence="3">Cytoskeleton</location>
        <location evidence="3">Cilium basal body</location>
    </subcellularLocation>
    <subcellularLocation>
        <location evidence="3">Membrane</location>
        <topology evidence="3">Multi-pass membrane protein</topology>
    </subcellularLocation>
</comment>
<comment type="similarity">
    <text evidence="6">Belongs to the TAPT1 family.</text>
</comment>
<comment type="sequence caution" evidence="6">
    <conflict type="erroneous initiation">
        <sequence resource="EMBL-CDS" id="CAG31425"/>
    </conflict>
</comment>
<proteinExistence type="evidence at transcript level"/>
<gene>
    <name type="primary">TAPT1</name>
    <name type="ORF">RCJMB04_6d24</name>
</gene>
<dbReference type="EMBL" id="AJ719766">
    <property type="protein sequence ID" value="CAG31425.1"/>
    <property type="status" value="ALT_INIT"/>
    <property type="molecule type" value="mRNA"/>
</dbReference>
<dbReference type="RefSeq" id="NP_001026332.2">
    <property type="nucleotide sequence ID" value="NM_001031161.2"/>
</dbReference>
<dbReference type="SMR" id="Q5ZLG8"/>
<dbReference type="FunCoup" id="Q5ZLG8">
    <property type="interactions" value="920"/>
</dbReference>
<dbReference type="STRING" id="9031.ENSGALP00000058338"/>
<dbReference type="PaxDb" id="9031-ENSGALP00000036511"/>
<dbReference type="Ensembl" id="ENSGALT00000037304">
    <property type="protein sequence ID" value="ENSGALP00000036511"/>
    <property type="gene ID" value="ENSGALG00000014486"/>
</dbReference>
<dbReference type="GeneID" id="422824"/>
<dbReference type="KEGG" id="gga:422824"/>
<dbReference type="CTD" id="202018"/>
<dbReference type="VEuPathDB" id="HostDB:geneid_422824"/>
<dbReference type="eggNOG" id="KOG2490">
    <property type="taxonomic scope" value="Eukaryota"/>
</dbReference>
<dbReference type="HOGENOM" id="CLU_003655_3_0_1"/>
<dbReference type="InParanoid" id="Q5ZLG8"/>
<dbReference type="OrthoDB" id="29023at2759"/>
<dbReference type="PhylomeDB" id="Q5ZLG8"/>
<dbReference type="PRO" id="PR:Q5ZLG8"/>
<dbReference type="Proteomes" id="UP000000539">
    <property type="component" value="Unassembled WGS sequence"/>
</dbReference>
<dbReference type="GO" id="GO:0005813">
    <property type="term" value="C:centrosome"/>
    <property type="evidence" value="ECO:0000250"/>
    <property type="project" value="UniProtKB"/>
</dbReference>
<dbReference type="GO" id="GO:0036064">
    <property type="term" value="C:ciliary basal body"/>
    <property type="evidence" value="ECO:0000250"/>
    <property type="project" value="UniProtKB"/>
</dbReference>
<dbReference type="GO" id="GO:0005737">
    <property type="term" value="C:cytoplasm"/>
    <property type="evidence" value="ECO:0007669"/>
    <property type="project" value="UniProtKB-KW"/>
</dbReference>
<dbReference type="GO" id="GO:0016020">
    <property type="term" value="C:membrane"/>
    <property type="evidence" value="ECO:0007669"/>
    <property type="project" value="UniProtKB-SubCell"/>
</dbReference>
<dbReference type="GO" id="GO:0051216">
    <property type="term" value="P:cartilage development"/>
    <property type="evidence" value="ECO:0007669"/>
    <property type="project" value="UniProtKB-KW"/>
</dbReference>
<dbReference type="GO" id="GO:0030030">
    <property type="term" value="P:cell projection organization"/>
    <property type="evidence" value="ECO:0007669"/>
    <property type="project" value="UniProtKB-KW"/>
</dbReference>
<dbReference type="GO" id="GO:0014032">
    <property type="term" value="P:neural crest cell development"/>
    <property type="evidence" value="ECO:0000250"/>
    <property type="project" value="UniProtKB"/>
</dbReference>
<dbReference type="GO" id="GO:0001503">
    <property type="term" value="P:ossification"/>
    <property type="evidence" value="ECO:0007669"/>
    <property type="project" value="UniProtKB-KW"/>
</dbReference>
<dbReference type="GO" id="GO:1903012">
    <property type="term" value="P:positive regulation of bone development"/>
    <property type="evidence" value="ECO:0000250"/>
    <property type="project" value="UniProtKB"/>
</dbReference>
<dbReference type="GO" id="GO:0061036">
    <property type="term" value="P:positive regulation of cartilage development"/>
    <property type="evidence" value="ECO:0000250"/>
    <property type="project" value="UniProtKB"/>
</dbReference>
<dbReference type="GO" id="GO:0045724">
    <property type="term" value="P:positive regulation of cilium assembly"/>
    <property type="evidence" value="ECO:0000250"/>
    <property type="project" value="UniProtKB"/>
</dbReference>
<dbReference type="InterPro" id="IPR008010">
    <property type="entry name" value="Tatp1"/>
</dbReference>
<dbReference type="PANTHER" id="PTHR13317">
    <property type="entry name" value="TRANSMEMBRANE ANTERIOR POSTERIOR TRANSFORMATION PROTEIN 1 HOMOLOG"/>
    <property type="match status" value="1"/>
</dbReference>
<dbReference type="PANTHER" id="PTHR13317:SF4">
    <property type="entry name" value="TRANSMEMBRANE ANTERIOR POSTERIOR TRANSFORMATION PROTEIN 1 HOMOLOG"/>
    <property type="match status" value="1"/>
</dbReference>
<dbReference type="Pfam" id="PF05346">
    <property type="entry name" value="DUF747"/>
    <property type="match status" value="1"/>
</dbReference>
<protein>
    <recommendedName>
        <fullName>Transmembrane anterior posterior transformation protein 1 homolog</fullName>
    </recommendedName>
</protein>
<feature type="chain" id="PRO_0000328874" description="Transmembrane anterior posterior transformation protein 1 homolog">
    <location>
        <begin position="1"/>
        <end position="581"/>
    </location>
</feature>
<feature type="transmembrane region" description="Helical" evidence="4">
    <location>
        <begin position="125"/>
        <end position="145"/>
    </location>
</feature>
<feature type="transmembrane region" description="Helical" evidence="4">
    <location>
        <begin position="182"/>
        <end position="202"/>
    </location>
</feature>
<feature type="transmembrane region" description="Helical" evidence="4">
    <location>
        <begin position="250"/>
        <end position="270"/>
    </location>
</feature>
<feature type="transmembrane region" description="Helical" evidence="4">
    <location>
        <begin position="417"/>
        <end position="437"/>
    </location>
</feature>
<feature type="transmembrane region" description="Helical" evidence="4">
    <location>
        <begin position="439"/>
        <end position="459"/>
    </location>
</feature>
<feature type="region of interest" description="Disordered" evidence="5">
    <location>
        <begin position="1"/>
        <end position="72"/>
    </location>
</feature>
<feature type="region of interest" description="Disordered" evidence="5">
    <location>
        <begin position="484"/>
        <end position="563"/>
    </location>
</feature>
<feature type="compositionally biased region" description="Gly residues" evidence="5">
    <location>
        <begin position="11"/>
        <end position="23"/>
    </location>
</feature>
<feature type="compositionally biased region" description="Pro residues" evidence="5">
    <location>
        <begin position="46"/>
        <end position="55"/>
    </location>
</feature>
<feature type="compositionally biased region" description="Polar residues" evidence="5">
    <location>
        <begin position="500"/>
        <end position="522"/>
    </location>
</feature>
<feature type="compositionally biased region" description="Polar residues" evidence="5">
    <location>
        <begin position="532"/>
        <end position="542"/>
    </location>
</feature>
<feature type="compositionally biased region" description="Basic and acidic residues" evidence="5">
    <location>
        <begin position="549"/>
        <end position="563"/>
    </location>
</feature>